<protein>
    <recommendedName>
        <fullName>DNA repair protein RAD5</fullName>
        <ecNumber>3.6.4.-</ecNumber>
    </recommendedName>
</protein>
<comment type="function">
    <text evidence="1">Probable helicase, member of the UBC2/RAD6 epistasis group. Functions with DNA repair protein RAD18 in error-free postreplication DNA repair. Involved in the maintenance of wild-type rates of instability of simple repetitive sequences such as poly(GT) repeats. Seems to be involved in maintaining a balance which acts in favor of error-prone non-homologous joining during DNA double-strand breaks repairs (By similarity).</text>
</comment>
<comment type="subcellular location">
    <subcellularLocation>
        <location evidence="1">Cytoplasm</location>
    </subcellularLocation>
    <subcellularLocation>
        <location evidence="1">Nucleus</location>
    </subcellularLocation>
</comment>
<comment type="similarity">
    <text evidence="6">Belongs to the SNF2/RAD54 helicase family.</text>
</comment>
<gene>
    <name type="primary">RAD5</name>
    <name type="ordered locus">CAALFM_C200350WA</name>
    <name type="ORF">CaO19.2097</name>
    <name type="ORF">CaO19.9644</name>
</gene>
<keyword id="KW-0067">ATP-binding</keyword>
<keyword id="KW-0963">Cytoplasm</keyword>
<keyword id="KW-0227">DNA damage</keyword>
<keyword id="KW-0234">DNA repair</keyword>
<keyword id="KW-0238">DNA-binding</keyword>
<keyword id="KW-0347">Helicase</keyword>
<keyword id="KW-0378">Hydrolase</keyword>
<keyword id="KW-0479">Metal-binding</keyword>
<keyword id="KW-0547">Nucleotide-binding</keyword>
<keyword id="KW-0539">Nucleus</keyword>
<keyword id="KW-1185">Reference proteome</keyword>
<keyword id="KW-0862">Zinc</keyword>
<keyword id="KW-0863">Zinc-finger</keyword>
<proteinExistence type="inferred from homology"/>
<feature type="chain" id="PRO_0000056119" description="DNA repair protein RAD5">
    <location>
        <begin position="1"/>
        <end position="1084"/>
    </location>
</feature>
<feature type="domain" description="Helicase ATP-binding" evidence="3">
    <location>
        <begin position="450"/>
        <end position="643"/>
    </location>
</feature>
<feature type="domain" description="Helicase C-terminal" evidence="4">
    <location>
        <begin position="913"/>
        <end position="1071"/>
    </location>
</feature>
<feature type="zinc finger region" description="RING-type" evidence="2">
    <location>
        <begin position="816"/>
        <end position="863"/>
    </location>
</feature>
<feature type="region of interest" description="Disordered" evidence="5">
    <location>
        <begin position="11"/>
        <end position="51"/>
    </location>
</feature>
<feature type="short sequence motif" description="DEGH box">
    <location>
        <begin position="594"/>
        <end position="597"/>
    </location>
</feature>
<feature type="binding site" evidence="3">
    <location>
        <begin position="463"/>
        <end position="470"/>
    </location>
    <ligand>
        <name>ATP</name>
        <dbReference type="ChEBI" id="CHEBI:30616"/>
    </ligand>
</feature>
<name>RAD5_CANAL</name>
<sequence>MKVIKKRFFKPKEETLPSDEVPDPQSSAEPLHSLFVPDESEEEETTTSPKTNFEKDIIAIVGDISPIIMKYLYAKYSQKRNGAKFAVTELLTNPPDVEKLQQDSIASQSAKRPHTIVSYQEPPNKKVNINPDSASSNNEPLMWQRLIGSLNIQAMATXPDHETVEIPGKXKLKRITTKNSTMANSAIVRVYHNEREIGRIPEDWTRILSPLFDLNIAVFEASVLEETKSRLSTGDSFVIEIEVYLTNSSFAKNLDATENPIDLKKSNFDYSKESESEAALRLRQFAISNLFDRLAIKPLKVNDDTEDEEDISSQEINSGDVEHPVPEINLDQMKEFYQSNNQLKILEGLPETTTPPKENFALDLRSYQKHGLSWMLAREKELDVLEMLSNEDKLSSQSRKELENLGTMNPLWRKYKWPYATEATQDPTQNQTEKYFYANMYNGELSLEKPVIKSSLRGGILADEMGLGKTIATLALVNSVPYDNFPEPKSDRPYASQTTLIVVPMSLLFQWKSEFEKCNNNSRHVCRLHYGEDQETNLAWSLCNPDNSKIPIVMITTYGTVLNEFTRLSKRRNSKGELPKVGLYSVKFFRIILDEGHNIRNRNTKTAKSVYELQSSRKWILTGTPIVNRLDDLYSLTKFLELDPWNNFSYWKTFVTLPFEQKKISQTLDVVKSILEPIFLRRTKSQKKNGKPLVELPAKEVVIEQIKFNDDEEKLYQWFKDRAYASFAEGIKSGQLLRRYTQILTHILRLRQVCCHVDLIGGAHEMDDEIIEAEQDEDMRKFLTSIKENQIRFANDTDVKEKMYNLYGKIKEENECSICTQVPIPYSEMVVTPCAHTFCLSCILEHLDFQKELKKEKLCPNCRSPISKYQLFRIRNQPTKGNEIRFHIQKDAPDYSFQLYLYDPNRSSSKIQALVRHLKALHSQSPNSKVIVFSQFSSYLDIIQSELKLASEEFIVFKFDGRLNMNDRTKLLESFNQPLEDGKVAILLLSLKAGGVGLNLTTASRAYMMDPWWSPSIEDQAIDRIHRIGQNETVKVVRFIMENSIETKMLKIQERKKQIGEAVAAEEEERRKRRIEEIQILFEE</sequence>
<reference key="1">
    <citation type="journal article" date="2004" name="Proc. Natl. Acad. Sci. U.S.A.">
        <title>The diploid genome sequence of Candida albicans.</title>
        <authorList>
            <person name="Jones T."/>
            <person name="Federspiel N.A."/>
            <person name="Chibana H."/>
            <person name="Dungan J."/>
            <person name="Kalman S."/>
            <person name="Magee B.B."/>
            <person name="Newport G."/>
            <person name="Thorstenson Y.R."/>
            <person name="Agabian N."/>
            <person name="Magee P.T."/>
            <person name="Davis R.W."/>
            <person name="Scherer S."/>
        </authorList>
    </citation>
    <scope>NUCLEOTIDE SEQUENCE [LARGE SCALE GENOMIC DNA]</scope>
    <source>
        <strain>SC5314 / ATCC MYA-2876</strain>
    </source>
</reference>
<reference key="2">
    <citation type="journal article" date="2007" name="Genome Biol.">
        <title>Assembly of the Candida albicans genome into sixteen supercontigs aligned on the eight chromosomes.</title>
        <authorList>
            <person name="van het Hoog M."/>
            <person name="Rast T.J."/>
            <person name="Martchenko M."/>
            <person name="Grindle S."/>
            <person name="Dignard D."/>
            <person name="Hogues H."/>
            <person name="Cuomo C."/>
            <person name="Berriman M."/>
            <person name="Scherer S."/>
            <person name="Magee B.B."/>
            <person name="Whiteway M."/>
            <person name="Chibana H."/>
            <person name="Nantel A."/>
            <person name="Magee P.T."/>
        </authorList>
    </citation>
    <scope>GENOME REANNOTATION</scope>
    <source>
        <strain>SC5314 / ATCC MYA-2876</strain>
    </source>
</reference>
<reference key="3">
    <citation type="journal article" date="2013" name="Genome Biol.">
        <title>Assembly of a phased diploid Candida albicans genome facilitates allele-specific measurements and provides a simple model for repeat and indel structure.</title>
        <authorList>
            <person name="Muzzey D."/>
            <person name="Schwartz K."/>
            <person name="Weissman J.S."/>
            <person name="Sherlock G."/>
        </authorList>
    </citation>
    <scope>NUCLEOTIDE SEQUENCE [LARGE SCALE GENOMIC DNA]</scope>
    <scope>GENOME REANNOTATION</scope>
    <source>
        <strain>SC5314 / ATCC MYA-2876</strain>
    </source>
</reference>
<organism>
    <name type="scientific">Candida albicans (strain SC5314 / ATCC MYA-2876)</name>
    <name type="common">Yeast</name>
    <dbReference type="NCBI Taxonomy" id="237561"/>
    <lineage>
        <taxon>Eukaryota</taxon>
        <taxon>Fungi</taxon>
        <taxon>Dikarya</taxon>
        <taxon>Ascomycota</taxon>
        <taxon>Saccharomycotina</taxon>
        <taxon>Pichiomycetes</taxon>
        <taxon>Debaryomycetaceae</taxon>
        <taxon>Candida/Lodderomyces clade</taxon>
        <taxon>Candida</taxon>
    </lineage>
</organism>
<accession>Q5ACX1</accession>
<accession>A0A1D8PG21</accession>
<evidence type="ECO:0000250" key="1"/>
<evidence type="ECO:0000255" key="2">
    <source>
        <dbReference type="PROSITE-ProRule" id="PRU00175"/>
    </source>
</evidence>
<evidence type="ECO:0000255" key="3">
    <source>
        <dbReference type="PROSITE-ProRule" id="PRU00541"/>
    </source>
</evidence>
<evidence type="ECO:0000255" key="4">
    <source>
        <dbReference type="PROSITE-ProRule" id="PRU00542"/>
    </source>
</evidence>
<evidence type="ECO:0000256" key="5">
    <source>
        <dbReference type="SAM" id="MobiDB-lite"/>
    </source>
</evidence>
<evidence type="ECO:0000305" key="6"/>
<dbReference type="EC" id="3.6.4.-"/>
<dbReference type="EMBL" id="CP017624">
    <property type="protein sequence ID" value="AOW27089.1"/>
    <property type="molecule type" value="Genomic_DNA"/>
</dbReference>
<dbReference type="RefSeq" id="XP_719543.2">
    <property type="nucleotide sequence ID" value="XM_714450.2"/>
</dbReference>
<dbReference type="BioGRID" id="1221851">
    <property type="interactions" value="1"/>
</dbReference>
<dbReference type="FunCoup" id="Q5ACX1">
    <property type="interactions" value="1064"/>
</dbReference>
<dbReference type="STRING" id="237561.Q5ACX1"/>
<dbReference type="EnsemblFungi" id="C2_00350W_A-T">
    <property type="protein sequence ID" value="C2_00350W_A-T-p1"/>
    <property type="gene ID" value="C2_00350W_A"/>
</dbReference>
<dbReference type="GeneID" id="3638827"/>
<dbReference type="KEGG" id="cal:CAALFM_C200350WA"/>
<dbReference type="CGD" id="CAL0000193075">
    <property type="gene designation" value="orf19.9644"/>
</dbReference>
<dbReference type="VEuPathDB" id="FungiDB:C2_00350W_A"/>
<dbReference type="eggNOG" id="KOG1001">
    <property type="taxonomic scope" value="Eukaryota"/>
</dbReference>
<dbReference type="HOGENOM" id="CLU_000315_2_5_1"/>
<dbReference type="InParanoid" id="Q5ACX1"/>
<dbReference type="OrthoDB" id="2801544at2759"/>
<dbReference type="PRO" id="PR:Q5ACX1"/>
<dbReference type="Proteomes" id="UP000000559">
    <property type="component" value="Chromosome 2"/>
</dbReference>
<dbReference type="GO" id="GO:0005737">
    <property type="term" value="C:cytoplasm"/>
    <property type="evidence" value="ECO:0007669"/>
    <property type="project" value="UniProtKB-SubCell"/>
</dbReference>
<dbReference type="GO" id="GO:0005634">
    <property type="term" value="C:nucleus"/>
    <property type="evidence" value="ECO:0000318"/>
    <property type="project" value="GO_Central"/>
</dbReference>
<dbReference type="GO" id="GO:0005524">
    <property type="term" value="F:ATP binding"/>
    <property type="evidence" value="ECO:0007669"/>
    <property type="project" value="UniProtKB-KW"/>
</dbReference>
<dbReference type="GO" id="GO:0008094">
    <property type="term" value="F:ATP-dependent activity, acting on DNA"/>
    <property type="evidence" value="ECO:0000318"/>
    <property type="project" value="GO_Central"/>
</dbReference>
<dbReference type="GO" id="GO:0003677">
    <property type="term" value="F:DNA binding"/>
    <property type="evidence" value="ECO:0007669"/>
    <property type="project" value="UniProtKB-KW"/>
</dbReference>
<dbReference type="GO" id="GO:0004386">
    <property type="term" value="F:helicase activity"/>
    <property type="evidence" value="ECO:0007669"/>
    <property type="project" value="UniProtKB-KW"/>
</dbReference>
<dbReference type="GO" id="GO:0016818">
    <property type="term" value="F:hydrolase activity, acting on acid anhydrides, in phosphorus-containing anhydrides"/>
    <property type="evidence" value="ECO:0007669"/>
    <property type="project" value="InterPro"/>
</dbReference>
<dbReference type="GO" id="GO:0008270">
    <property type="term" value="F:zinc ion binding"/>
    <property type="evidence" value="ECO:0007669"/>
    <property type="project" value="UniProtKB-KW"/>
</dbReference>
<dbReference type="GO" id="GO:0006281">
    <property type="term" value="P:DNA repair"/>
    <property type="evidence" value="ECO:0000318"/>
    <property type="project" value="GO_Central"/>
</dbReference>
<dbReference type="CDD" id="cd18008">
    <property type="entry name" value="DEXDc_SHPRH-like"/>
    <property type="match status" value="1"/>
</dbReference>
<dbReference type="CDD" id="cd18793">
    <property type="entry name" value="SF2_C_SNF"/>
    <property type="match status" value="1"/>
</dbReference>
<dbReference type="Gene3D" id="3.40.50.300">
    <property type="entry name" value="P-loop containing nucleotide triphosphate hydrolases"/>
    <property type="match status" value="1"/>
</dbReference>
<dbReference type="Gene3D" id="3.40.50.10810">
    <property type="entry name" value="Tandem AAA-ATPase domain"/>
    <property type="match status" value="1"/>
</dbReference>
<dbReference type="Gene3D" id="3.30.40.10">
    <property type="entry name" value="Zinc/RING finger domain, C3HC4 (zinc finger)"/>
    <property type="match status" value="1"/>
</dbReference>
<dbReference type="InterPro" id="IPR014001">
    <property type="entry name" value="Helicase_ATP-bd"/>
</dbReference>
<dbReference type="InterPro" id="IPR001650">
    <property type="entry name" value="Helicase_C-like"/>
</dbReference>
<dbReference type="InterPro" id="IPR014905">
    <property type="entry name" value="HIRAN"/>
</dbReference>
<dbReference type="InterPro" id="IPR027417">
    <property type="entry name" value="P-loop_NTPase"/>
</dbReference>
<dbReference type="InterPro" id="IPR038718">
    <property type="entry name" value="SNF2-like_sf"/>
</dbReference>
<dbReference type="InterPro" id="IPR049730">
    <property type="entry name" value="SNF2/RAD54-like_C"/>
</dbReference>
<dbReference type="InterPro" id="IPR000330">
    <property type="entry name" value="SNF2_N"/>
</dbReference>
<dbReference type="InterPro" id="IPR050628">
    <property type="entry name" value="SNF2_RAD54_helicase_TF"/>
</dbReference>
<dbReference type="InterPro" id="IPR001841">
    <property type="entry name" value="Znf_RING"/>
</dbReference>
<dbReference type="InterPro" id="IPR013083">
    <property type="entry name" value="Znf_RING/FYVE/PHD"/>
</dbReference>
<dbReference type="InterPro" id="IPR017907">
    <property type="entry name" value="Znf_RING_CS"/>
</dbReference>
<dbReference type="PANTHER" id="PTHR45626:SF22">
    <property type="entry name" value="DNA REPAIR PROTEIN RAD5"/>
    <property type="match status" value="1"/>
</dbReference>
<dbReference type="PANTHER" id="PTHR45626">
    <property type="entry name" value="TRANSCRIPTION TERMINATION FACTOR 2-RELATED"/>
    <property type="match status" value="1"/>
</dbReference>
<dbReference type="Pfam" id="PF00271">
    <property type="entry name" value="Helicase_C"/>
    <property type="match status" value="1"/>
</dbReference>
<dbReference type="Pfam" id="PF08797">
    <property type="entry name" value="HIRAN"/>
    <property type="match status" value="1"/>
</dbReference>
<dbReference type="Pfam" id="PF00176">
    <property type="entry name" value="SNF2-rel_dom"/>
    <property type="match status" value="1"/>
</dbReference>
<dbReference type="Pfam" id="PF13639">
    <property type="entry name" value="zf-RING_2"/>
    <property type="match status" value="1"/>
</dbReference>
<dbReference type="SMART" id="SM00487">
    <property type="entry name" value="DEXDc"/>
    <property type="match status" value="1"/>
</dbReference>
<dbReference type="SMART" id="SM00490">
    <property type="entry name" value="HELICc"/>
    <property type="match status" value="1"/>
</dbReference>
<dbReference type="SMART" id="SM00910">
    <property type="entry name" value="HIRAN"/>
    <property type="match status" value="1"/>
</dbReference>
<dbReference type="SMART" id="SM00184">
    <property type="entry name" value="RING"/>
    <property type="match status" value="1"/>
</dbReference>
<dbReference type="SUPFAM" id="SSF52540">
    <property type="entry name" value="P-loop containing nucleoside triphosphate hydrolases"/>
    <property type="match status" value="2"/>
</dbReference>
<dbReference type="SUPFAM" id="SSF57850">
    <property type="entry name" value="RING/U-box"/>
    <property type="match status" value="1"/>
</dbReference>
<dbReference type="PROSITE" id="PS51192">
    <property type="entry name" value="HELICASE_ATP_BIND_1"/>
    <property type="match status" value="1"/>
</dbReference>
<dbReference type="PROSITE" id="PS51194">
    <property type="entry name" value="HELICASE_CTER"/>
    <property type="match status" value="1"/>
</dbReference>
<dbReference type="PROSITE" id="PS00518">
    <property type="entry name" value="ZF_RING_1"/>
    <property type="match status" value="1"/>
</dbReference>
<dbReference type="PROSITE" id="PS50089">
    <property type="entry name" value="ZF_RING_2"/>
    <property type="match status" value="1"/>
</dbReference>